<gene>
    <name type="primary">FAM216B</name>
</gene>
<sequence>MGEKWKRQQKLCNVPHIPRIRVPRSASDTPLLKDLTQGQQRYFYSIMRIYSPRPQWEALQARYLHSLQHQQLLGYITQREASACAAVLRDSTKRASAKAGPHRTVPQRAAGRTRTQPSARPVCVIPLRARSTRLPSLRSRAVHKL</sequence>
<accession>Q17QP0</accession>
<organism>
    <name type="scientific">Bos taurus</name>
    <name type="common">Bovine</name>
    <dbReference type="NCBI Taxonomy" id="9913"/>
    <lineage>
        <taxon>Eukaryota</taxon>
        <taxon>Metazoa</taxon>
        <taxon>Chordata</taxon>
        <taxon>Craniata</taxon>
        <taxon>Vertebrata</taxon>
        <taxon>Euteleostomi</taxon>
        <taxon>Mammalia</taxon>
        <taxon>Eutheria</taxon>
        <taxon>Laurasiatheria</taxon>
        <taxon>Artiodactyla</taxon>
        <taxon>Ruminantia</taxon>
        <taxon>Pecora</taxon>
        <taxon>Bovidae</taxon>
        <taxon>Bovinae</taxon>
        <taxon>Bos</taxon>
    </lineage>
</organism>
<comment type="similarity">
    <text evidence="2">Belongs to the FAM216 family.</text>
</comment>
<evidence type="ECO:0000256" key="1">
    <source>
        <dbReference type="SAM" id="MobiDB-lite"/>
    </source>
</evidence>
<evidence type="ECO:0000305" key="2"/>
<reference key="1">
    <citation type="submission" date="2006-06" db="EMBL/GenBank/DDBJ databases">
        <authorList>
            <consortium name="NIH - Mammalian Gene Collection (MGC) project"/>
        </authorList>
    </citation>
    <scope>NUCLEOTIDE SEQUENCE [LARGE SCALE MRNA]</scope>
    <source>
        <strain>Hereford</strain>
        <tissue>Thalamus</tissue>
    </source>
</reference>
<name>F216B_BOVIN</name>
<feature type="chain" id="PRO_0000263727" description="Protein FAM216B">
    <location>
        <begin position="1"/>
        <end position="145"/>
    </location>
</feature>
<feature type="region of interest" description="Disordered" evidence="1">
    <location>
        <begin position="92"/>
        <end position="121"/>
    </location>
</feature>
<proteinExistence type="evidence at transcript level"/>
<protein>
    <recommendedName>
        <fullName>Protein FAM216B</fullName>
    </recommendedName>
</protein>
<dbReference type="EMBL" id="BC118252">
    <property type="protein sequence ID" value="AAI18253.1"/>
    <property type="molecule type" value="mRNA"/>
</dbReference>
<dbReference type="RefSeq" id="NP_001069783.1">
    <property type="nucleotide sequence ID" value="NM_001076315.1"/>
</dbReference>
<dbReference type="FunCoup" id="Q17QP0">
    <property type="interactions" value="2"/>
</dbReference>
<dbReference type="STRING" id="9913.ENSBTAP00000004673"/>
<dbReference type="PaxDb" id="9913-ENSBTAP00000004673"/>
<dbReference type="Ensembl" id="ENSBTAT00000004673.4">
    <property type="protein sequence ID" value="ENSBTAP00000004673.3"/>
    <property type="gene ID" value="ENSBTAG00000003595.4"/>
</dbReference>
<dbReference type="GeneID" id="614187"/>
<dbReference type="KEGG" id="bta:614187"/>
<dbReference type="CTD" id="144809"/>
<dbReference type="VEuPathDB" id="HostDB:ENSBTAG00000003595"/>
<dbReference type="VGNC" id="VGNC:28796">
    <property type="gene designation" value="FAM216B"/>
</dbReference>
<dbReference type="eggNOG" id="ENOG502SAWN">
    <property type="taxonomic scope" value="Eukaryota"/>
</dbReference>
<dbReference type="GeneTree" id="ENSGT00940000154512"/>
<dbReference type="HOGENOM" id="CLU_125533_0_0_1"/>
<dbReference type="InParanoid" id="Q17QP0"/>
<dbReference type="OMA" id="RVPHSIY"/>
<dbReference type="OrthoDB" id="9902980at2759"/>
<dbReference type="TreeFam" id="TF337013"/>
<dbReference type="Proteomes" id="UP000009136">
    <property type="component" value="Chromosome 12"/>
</dbReference>
<dbReference type="Bgee" id="ENSBTAG00000003595">
    <property type="expression patterns" value="Expressed in olfactory segment of nasal mucosa and 54 other cell types or tissues"/>
</dbReference>
<dbReference type="InterPro" id="IPR029373">
    <property type="entry name" value="FAM216"/>
</dbReference>
<dbReference type="PANTHER" id="PTHR16476">
    <property type="entry name" value="FAMILY WITH SEQUENCE SIMILARITY 216 MEMBER A"/>
    <property type="match status" value="1"/>
</dbReference>
<dbReference type="PANTHER" id="PTHR16476:SF3">
    <property type="entry name" value="PROTEIN FAM216B"/>
    <property type="match status" value="1"/>
</dbReference>
<dbReference type="Pfam" id="PF15107">
    <property type="entry name" value="FAM216B"/>
    <property type="match status" value="1"/>
</dbReference>
<keyword id="KW-1185">Reference proteome</keyword>